<comment type="catalytic activity">
    <reaction>
        <text>sn-glycerol 3-phosphate + an acyl-CoA = a 1-acyl-sn-glycero-3-phosphate + CoA</text>
        <dbReference type="Rhea" id="RHEA:15325"/>
        <dbReference type="ChEBI" id="CHEBI:57287"/>
        <dbReference type="ChEBI" id="CHEBI:57597"/>
        <dbReference type="ChEBI" id="CHEBI:57970"/>
        <dbReference type="ChEBI" id="CHEBI:58342"/>
        <dbReference type="EC" id="2.3.1.15"/>
    </reaction>
</comment>
<comment type="pathway">
    <text>Phospholipid metabolism; CDP-diacylglycerol biosynthesis; CDP-diacylglycerol from sn-glycerol 3-phosphate: step 1/3.</text>
</comment>
<comment type="subcellular location">
    <subcellularLocation>
        <location evidence="1">Cell inner membrane</location>
        <topology evidence="1">Peripheral membrane protein</topology>
        <orientation evidence="1">Cytoplasmic side</orientation>
    </subcellularLocation>
</comment>
<comment type="domain">
    <text evidence="1">The HXXXXD motif is essential for acyltransferase activity and may constitute the binding site for the phosphate moiety of the glycerol-3-phosphate.</text>
</comment>
<comment type="similarity">
    <text evidence="2">Belongs to the GPAT/DAPAT family.</text>
</comment>
<comment type="sequence caution" evidence="2">
    <conflict type="erroneous initiation">
        <sequence resource="EMBL-CDS" id="AAG59240"/>
    </conflict>
    <text>Extended N-terminus.</text>
</comment>
<name>PLSB_ECO57</name>
<proteinExistence type="inferred from homology"/>
<dbReference type="EC" id="2.3.1.15"/>
<dbReference type="EMBL" id="AE005174">
    <property type="protein sequence ID" value="AAG59240.1"/>
    <property type="status" value="ALT_INIT"/>
    <property type="molecule type" value="Genomic_DNA"/>
</dbReference>
<dbReference type="EMBL" id="BA000007">
    <property type="protein sequence ID" value="BAB38447.2"/>
    <property type="molecule type" value="Genomic_DNA"/>
</dbReference>
<dbReference type="PIR" id="D86097">
    <property type="entry name" value="D86097"/>
</dbReference>
<dbReference type="PIR" id="H91256">
    <property type="entry name" value="H91256"/>
</dbReference>
<dbReference type="RefSeq" id="NP_313051.2">
    <property type="nucleotide sequence ID" value="NC_002695.1"/>
</dbReference>
<dbReference type="RefSeq" id="WP_001301502.1">
    <property type="nucleotide sequence ID" value="NZ_VOAI01000027.1"/>
</dbReference>
<dbReference type="SMR" id="P58130"/>
<dbReference type="STRING" id="155864.Z5640"/>
<dbReference type="GeneID" id="915055"/>
<dbReference type="KEGG" id="ece:Z5640"/>
<dbReference type="KEGG" id="ecs:ECs_5024"/>
<dbReference type="PATRIC" id="fig|386585.9.peg.5247"/>
<dbReference type="eggNOG" id="COG2937">
    <property type="taxonomic scope" value="Bacteria"/>
</dbReference>
<dbReference type="HOGENOM" id="CLU_015407_0_0_6"/>
<dbReference type="OMA" id="EVIYVPC"/>
<dbReference type="UniPathway" id="UPA00557">
    <property type="reaction ID" value="UER00612"/>
</dbReference>
<dbReference type="Proteomes" id="UP000000558">
    <property type="component" value="Chromosome"/>
</dbReference>
<dbReference type="Proteomes" id="UP000002519">
    <property type="component" value="Chromosome"/>
</dbReference>
<dbReference type="GO" id="GO:0005886">
    <property type="term" value="C:plasma membrane"/>
    <property type="evidence" value="ECO:0007669"/>
    <property type="project" value="UniProtKB-SubCell"/>
</dbReference>
<dbReference type="GO" id="GO:0004366">
    <property type="term" value="F:glycerol-3-phosphate O-acyltransferase activity"/>
    <property type="evidence" value="ECO:0007669"/>
    <property type="project" value="UniProtKB-UniRule"/>
</dbReference>
<dbReference type="GO" id="GO:0016024">
    <property type="term" value="P:CDP-diacylglycerol biosynthetic process"/>
    <property type="evidence" value="ECO:0007669"/>
    <property type="project" value="UniProtKB-UniRule"/>
</dbReference>
<dbReference type="GO" id="GO:0006631">
    <property type="term" value="P:fatty acid metabolic process"/>
    <property type="evidence" value="ECO:0007669"/>
    <property type="project" value="TreeGrafter"/>
</dbReference>
<dbReference type="CDD" id="cd07993">
    <property type="entry name" value="LPLAT_DHAPAT-like"/>
    <property type="match status" value="1"/>
</dbReference>
<dbReference type="HAMAP" id="MF_00393">
    <property type="entry name" value="Glyc3P_acyltrans"/>
    <property type="match status" value="1"/>
</dbReference>
<dbReference type="InterPro" id="IPR022284">
    <property type="entry name" value="GPAT/DHAPAT"/>
</dbReference>
<dbReference type="InterPro" id="IPR045520">
    <property type="entry name" value="GPAT/DHAPAT_C"/>
</dbReference>
<dbReference type="InterPro" id="IPR041728">
    <property type="entry name" value="GPAT/DHAPAT_LPLAT"/>
</dbReference>
<dbReference type="InterPro" id="IPR028354">
    <property type="entry name" value="GPAT_PlsB"/>
</dbReference>
<dbReference type="InterPro" id="IPR002123">
    <property type="entry name" value="Plipid/glycerol_acylTrfase"/>
</dbReference>
<dbReference type="NCBIfam" id="TIGR03703">
    <property type="entry name" value="plsB"/>
    <property type="match status" value="1"/>
</dbReference>
<dbReference type="NCBIfam" id="NF003441">
    <property type="entry name" value="PRK04974.1"/>
    <property type="match status" value="1"/>
</dbReference>
<dbReference type="PANTHER" id="PTHR12563:SF17">
    <property type="entry name" value="DIHYDROXYACETONE PHOSPHATE ACYLTRANSFERASE"/>
    <property type="match status" value="1"/>
</dbReference>
<dbReference type="PANTHER" id="PTHR12563">
    <property type="entry name" value="GLYCEROL-3-PHOSPHATE ACYLTRANSFERASE"/>
    <property type="match status" value="1"/>
</dbReference>
<dbReference type="Pfam" id="PF01553">
    <property type="entry name" value="Acyltransferase"/>
    <property type="match status" value="1"/>
</dbReference>
<dbReference type="Pfam" id="PF19277">
    <property type="entry name" value="GPAT_C"/>
    <property type="match status" value="1"/>
</dbReference>
<dbReference type="PIRSF" id="PIRSF500064">
    <property type="entry name" value="GPAT"/>
    <property type="match status" value="1"/>
</dbReference>
<dbReference type="PIRSF" id="PIRSF000437">
    <property type="entry name" value="GPAT_DHAPAT"/>
    <property type="match status" value="1"/>
</dbReference>
<dbReference type="SMART" id="SM00563">
    <property type="entry name" value="PlsC"/>
    <property type="match status" value="1"/>
</dbReference>
<dbReference type="SUPFAM" id="SSF69593">
    <property type="entry name" value="Glycerol-3-phosphate (1)-acyltransferase"/>
    <property type="match status" value="1"/>
</dbReference>
<organism>
    <name type="scientific">Escherichia coli O157:H7</name>
    <dbReference type="NCBI Taxonomy" id="83334"/>
    <lineage>
        <taxon>Bacteria</taxon>
        <taxon>Pseudomonadati</taxon>
        <taxon>Pseudomonadota</taxon>
        <taxon>Gammaproteobacteria</taxon>
        <taxon>Enterobacterales</taxon>
        <taxon>Enterobacteriaceae</taxon>
        <taxon>Escherichia</taxon>
    </lineage>
</organism>
<accession>P58130</accession>
<reference key="1">
    <citation type="journal article" date="2001" name="Nature">
        <title>Genome sequence of enterohaemorrhagic Escherichia coli O157:H7.</title>
        <authorList>
            <person name="Perna N.T."/>
            <person name="Plunkett G. III"/>
            <person name="Burland V."/>
            <person name="Mau B."/>
            <person name="Glasner J.D."/>
            <person name="Rose D.J."/>
            <person name="Mayhew G.F."/>
            <person name="Evans P.S."/>
            <person name="Gregor J."/>
            <person name="Kirkpatrick H.A."/>
            <person name="Posfai G."/>
            <person name="Hackett J."/>
            <person name="Klink S."/>
            <person name="Boutin A."/>
            <person name="Shao Y."/>
            <person name="Miller L."/>
            <person name="Grotbeck E.J."/>
            <person name="Davis N.W."/>
            <person name="Lim A."/>
            <person name="Dimalanta E.T."/>
            <person name="Potamousis K."/>
            <person name="Apodaca J."/>
            <person name="Anantharaman T.S."/>
            <person name="Lin J."/>
            <person name="Yen G."/>
            <person name="Schwartz D.C."/>
            <person name="Welch R.A."/>
            <person name="Blattner F.R."/>
        </authorList>
    </citation>
    <scope>NUCLEOTIDE SEQUENCE [LARGE SCALE GENOMIC DNA]</scope>
    <source>
        <strain>O157:H7 / EDL933 / ATCC 700927 / EHEC</strain>
    </source>
</reference>
<reference key="2">
    <citation type="journal article" date="2001" name="DNA Res.">
        <title>Complete genome sequence of enterohemorrhagic Escherichia coli O157:H7 and genomic comparison with a laboratory strain K-12.</title>
        <authorList>
            <person name="Hayashi T."/>
            <person name="Makino K."/>
            <person name="Ohnishi M."/>
            <person name="Kurokawa K."/>
            <person name="Ishii K."/>
            <person name="Yokoyama K."/>
            <person name="Han C.-G."/>
            <person name="Ohtsubo E."/>
            <person name="Nakayama K."/>
            <person name="Murata T."/>
            <person name="Tanaka M."/>
            <person name="Tobe T."/>
            <person name="Iida T."/>
            <person name="Takami H."/>
            <person name="Honda T."/>
            <person name="Sasakawa C."/>
            <person name="Ogasawara N."/>
            <person name="Yasunaga T."/>
            <person name="Kuhara S."/>
            <person name="Shiba T."/>
            <person name="Hattori M."/>
            <person name="Shinagawa H."/>
        </authorList>
    </citation>
    <scope>NUCLEOTIDE SEQUENCE [LARGE SCALE GENOMIC DNA]</scope>
    <source>
        <strain>O157:H7 / Sakai / RIMD 0509952 / EHEC</strain>
    </source>
</reference>
<evidence type="ECO:0000250" key="1"/>
<evidence type="ECO:0000305" key="2"/>
<keyword id="KW-0012">Acyltransferase</keyword>
<keyword id="KW-0997">Cell inner membrane</keyword>
<keyword id="KW-1003">Cell membrane</keyword>
<keyword id="KW-0444">Lipid biosynthesis</keyword>
<keyword id="KW-0443">Lipid metabolism</keyword>
<keyword id="KW-0472">Membrane</keyword>
<keyword id="KW-0594">Phospholipid biosynthesis</keyword>
<keyword id="KW-1208">Phospholipid metabolism</keyword>
<keyword id="KW-1185">Reference proteome</keyword>
<keyword id="KW-0808">Transferase</keyword>
<gene>
    <name type="primary">plsB</name>
    <name type="ordered locus">Z5640</name>
    <name type="ordered locus">ECs5024</name>
</gene>
<protein>
    <recommendedName>
        <fullName>Glycerol-3-phosphate acyltransferase</fullName>
        <shortName>GPAT</shortName>
        <ecNumber>2.3.1.15</ecNumber>
    </recommendedName>
</protein>
<sequence length="807" mass="91409">MSGWPRIYYKLLNLPLSILVKSKSIPADPAPELGLDTSRPIMYVLPYNSKADLLTLRAQCLAHDLPDPLEPLEIDGTLLPRYVFIHGGPRVFTYYTPKEESIKLFHDYLDLHRSNPNLDVQMVPVSVMFGRAPGREKGEVNPPLRMLNGVQKFFAVLWLGRDSFVRFSPSVSLRRMADEHGTDKTIAQKLARVARMHFARQRLAAVGPRLPARQDLFNKLLASRAIAKAVEDEARSKKISHEKAQQNAIALMEEIAANFSYEMIRLTDRILGFTWNRLYQGINVHNAERVRQLAHDGHELVYVPCHRSHMDYLLLSYVLYHQGLVPPHIAAGINLNFWPAGPIFRRLGAFFIRRTFKGNKLYSTVFREYLGELFSRGYSVEYFVEGGRSRTGRLLDPKTGTLSMTIQAMLRGGTRPITLIPIYIGYEHVMEVGTYAKELRGATKEKESLPQMLRGLSKLRNLGQGYVNFGEPMPLMTYLNQHVPDWRESIDPIEAVRPAWLTPTVNNIAADLMVRINNAGAANAMNLCCTALLASRQRSLTREQLTEQLNCYLDLMRNVPYSTDSTVPSASASELIDHALQMNKFEVEKDTIGDIIILPREQAVLMTYYRNNIAHMLVLPSLMAAIVTQHRHISRDVLMEHVNVLYPMLKAELFLRWDRDELPDVIDALANEMQRQGLITLQDDELHINPVHSRTLQLLAAGARETLQRYAITFWLLSANPSINRGTLEKESRTVAQRLSVLHGINAPEFFDKAVFSSLVLTLRDEGYISDSGDAEPAETMKVYQLLAELITSDVRLTIESATQGEG</sequence>
<feature type="initiator methionine" description="Removed" evidence="1">
    <location>
        <position position="1"/>
    </location>
</feature>
<feature type="chain" id="PRO_0000195220" description="Glycerol-3-phosphate acyltransferase">
    <location>
        <begin position="2"/>
        <end position="807"/>
    </location>
</feature>
<feature type="short sequence motif" description="HXXXXD motif">
    <location>
        <begin position="306"/>
        <end position="311"/>
    </location>
</feature>